<accession>A8AY30</accession>
<keyword id="KW-0028">Amino-acid biosynthesis</keyword>
<keyword id="KW-0963">Cytoplasm</keyword>
<keyword id="KW-0368">Histidine biosynthesis</keyword>
<keyword id="KW-1185">Reference proteome</keyword>
<protein>
    <recommendedName>
        <fullName evidence="1">ATP phosphoribosyltransferase regulatory subunit</fullName>
    </recommendedName>
</protein>
<reference key="1">
    <citation type="journal article" date="2007" name="J. Bacteriol.">
        <title>Genome-wide transcriptional changes in Streptococcus gordonii in response to competence signaling peptide.</title>
        <authorList>
            <person name="Vickerman M.M."/>
            <person name="Iobst S."/>
            <person name="Jesionowski A.M."/>
            <person name="Gill S.R."/>
        </authorList>
    </citation>
    <scope>NUCLEOTIDE SEQUENCE [LARGE SCALE GENOMIC DNA]</scope>
    <source>
        <strain>Challis / ATCC 35105 / BCRC 15272 / CH1 / DL1 / V288</strain>
    </source>
</reference>
<dbReference type="EMBL" id="CP000725">
    <property type="protein sequence ID" value="ABV09533.1"/>
    <property type="molecule type" value="Genomic_DNA"/>
</dbReference>
<dbReference type="RefSeq" id="WP_012130495.1">
    <property type="nucleotide sequence ID" value="NC_009785.1"/>
</dbReference>
<dbReference type="SMR" id="A8AY30"/>
<dbReference type="STRING" id="467705.SGO_1410"/>
<dbReference type="KEGG" id="sgo:SGO_1410"/>
<dbReference type="eggNOG" id="COG3705">
    <property type="taxonomic scope" value="Bacteria"/>
</dbReference>
<dbReference type="HOGENOM" id="CLU_025113_0_0_9"/>
<dbReference type="UniPathway" id="UPA00031">
    <property type="reaction ID" value="UER00006"/>
</dbReference>
<dbReference type="Proteomes" id="UP000001131">
    <property type="component" value="Chromosome"/>
</dbReference>
<dbReference type="GO" id="GO:0005737">
    <property type="term" value="C:cytoplasm"/>
    <property type="evidence" value="ECO:0007669"/>
    <property type="project" value="UniProtKB-SubCell"/>
</dbReference>
<dbReference type="GO" id="GO:0140096">
    <property type="term" value="F:catalytic activity, acting on a protein"/>
    <property type="evidence" value="ECO:0007669"/>
    <property type="project" value="UniProtKB-ARBA"/>
</dbReference>
<dbReference type="GO" id="GO:0004821">
    <property type="term" value="F:histidine-tRNA ligase activity"/>
    <property type="evidence" value="ECO:0007669"/>
    <property type="project" value="TreeGrafter"/>
</dbReference>
<dbReference type="GO" id="GO:0016740">
    <property type="term" value="F:transferase activity"/>
    <property type="evidence" value="ECO:0007669"/>
    <property type="project" value="UniProtKB-ARBA"/>
</dbReference>
<dbReference type="GO" id="GO:0006427">
    <property type="term" value="P:histidyl-tRNA aminoacylation"/>
    <property type="evidence" value="ECO:0007669"/>
    <property type="project" value="TreeGrafter"/>
</dbReference>
<dbReference type="GO" id="GO:0000105">
    <property type="term" value="P:L-histidine biosynthetic process"/>
    <property type="evidence" value="ECO:0007669"/>
    <property type="project" value="UniProtKB-UniRule"/>
</dbReference>
<dbReference type="CDD" id="cd00773">
    <property type="entry name" value="HisRS-like_core"/>
    <property type="match status" value="1"/>
</dbReference>
<dbReference type="Gene3D" id="3.30.930.10">
    <property type="entry name" value="Bira Bifunctional Protein, Domain 2"/>
    <property type="match status" value="1"/>
</dbReference>
<dbReference type="HAMAP" id="MF_00125">
    <property type="entry name" value="HisZ"/>
    <property type="match status" value="1"/>
</dbReference>
<dbReference type="InterPro" id="IPR045864">
    <property type="entry name" value="aa-tRNA-synth_II/BPL/LPL"/>
</dbReference>
<dbReference type="InterPro" id="IPR041715">
    <property type="entry name" value="HisRS-like_core"/>
</dbReference>
<dbReference type="InterPro" id="IPR004516">
    <property type="entry name" value="HisRS/HisZ"/>
</dbReference>
<dbReference type="InterPro" id="IPR004517">
    <property type="entry name" value="HisZ"/>
</dbReference>
<dbReference type="PANTHER" id="PTHR43707:SF6">
    <property type="entry name" value="ATP PHOSPHORIBOSYLTRANSFERASE REGULATORY SUBUNIT"/>
    <property type="match status" value="1"/>
</dbReference>
<dbReference type="PANTHER" id="PTHR43707">
    <property type="entry name" value="HISTIDYL-TRNA SYNTHETASE"/>
    <property type="match status" value="1"/>
</dbReference>
<dbReference type="Pfam" id="PF13393">
    <property type="entry name" value="tRNA-synt_His"/>
    <property type="match status" value="1"/>
</dbReference>
<dbReference type="PIRSF" id="PIRSF001549">
    <property type="entry name" value="His-tRNA_synth"/>
    <property type="match status" value="1"/>
</dbReference>
<dbReference type="SUPFAM" id="SSF55681">
    <property type="entry name" value="Class II aaRS and biotin synthetases"/>
    <property type="match status" value="1"/>
</dbReference>
<evidence type="ECO:0000255" key="1">
    <source>
        <dbReference type="HAMAP-Rule" id="MF_00125"/>
    </source>
</evidence>
<gene>
    <name evidence="1" type="primary">hisZ</name>
    <name type="ordered locus">SGO_1410</name>
</gene>
<name>HISZ_STRGC</name>
<organism>
    <name type="scientific">Streptococcus gordonii (strain Challis / ATCC 35105 / BCRC 15272 / CH1 / DL1 / V288)</name>
    <dbReference type="NCBI Taxonomy" id="467705"/>
    <lineage>
        <taxon>Bacteria</taxon>
        <taxon>Bacillati</taxon>
        <taxon>Bacillota</taxon>
        <taxon>Bacilli</taxon>
        <taxon>Lactobacillales</taxon>
        <taxon>Streptococcaceae</taxon>
        <taxon>Streptococcus</taxon>
    </lineage>
</organism>
<comment type="function">
    <text evidence="1">Required for the first step of histidine biosynthesis. May allow the feedback regulation of ATP phosphoribosyltransferase activity by histidine.</text>
</comment>
<comment type="pathway">
    <text evidence="1">Amino-acid biosynthesis; L-histidine biosynthesis; L-histidine from 5-phospho-alpha-D-ribose 1-diphosphate: step 1/9.</text>
</comment>
<comment type="subunit">
    <text evidence="1">Heteromultimer composed of HisG and HisZ subunits.</text>
</comment>
<comment type="subcellular location">
    <subcellularLocation>
        <location evidence="1">Cytoplasm</location>
    </subcellularLocation>
</comment>
<comment type="miscellaneous">
    <text>This function is generally fulfilled by the C-terminal part of HisG, which is missing in some bacteria such as this one.</text>
</comment>
<comment type="similarity">
    <text evidence="1">Belongs to the class-II aminoacyl-tRNA synthetase family. HisZ subfamily.</text>
</comment>
<feature type="chain" id="PRO_1000076253" description="ATP phosphoribosyltransferase regulatory subunit">
    <location>
        <begin position="1"/>
        <end position="329"/>
    </location>
</feature>
<sequence length="329" mass="37473">MNKITLPIGMHDKLFKRARVTYEIERDISDFLMAQGFNRIDTPTLEHFEVFSDHVEPHHYHLFDKKGELLVLRPDVTSQIGRVIASTRVHTPTKFSYSGKVFHYQEELRGLANELSQAGIEIIGYPAREAVLEAIKTAKQSLDLAQVKSYQFEFSHAAILQTILESLVLDSQEEAQLLDYIRKKNRTGIFEFTQSRPSEFDDFLQELPYLFGPSQQVLARAREIVDNERILTALDDVEQVLRSLSDLLDQTTMDLGQVATMPYYTGLTFKVFGDRVPDAFLSGGRYDQLFKRFGATELTAIGWSLDIDSVYQAIHDDLPDEGGKEGDGR</sequence>
<proteinExistence type="inferred from homology"/>